<accession>A0A0B5ABD5</accession>
<dbReference type="EMBL" id="KP268617">
    <property type="protein sequence ID" value="AJD85821.1"/>
    <property type="molecule type" value="mRNA"/>
</dbReference>
<dbReference type="GO" id="GO:0005576">
    <property type="term" value="C:extracellular region"/>
    <property type="evidence" value="ECO:0007669"/>
    <property type="project" value="UniProtKB-SubCell"/>
</dbReference>
<dbReference type="GO" id="GO:0005179">
    <property type="term" value="F:hormone activity"/>
    <property type="evidence" value="ECO:0007669"/>
    <property type="project" value="UniProtKB-KW"/>
</dbReference>
<dbReference type="GO" id="GO:0090729">
    <property type="term" value="F:toxin activity"/>
    <property type="evidence" value="ECO:0007669"/>
    <property type="project" value="UniProtKB-KW"/>
</dbReference>
<dbReference type="GO" id="GO:0006006">
    <property type="term" value="P:glucose metabolic process"/>
    <property type="evidence" value="ECO:0007669"/>
    <property type="project" value="UniProtKB-KW"/>
</dbReference>
<dbReference type="Gene3D" id="1.10.100.10">
    <property type="entry name" value="Insulin-like"/>
    <property type="match status" value="1"/>
</dbReference>
<dbReference type="InterPro" id="IPR016179">
    <property type="entry name" value="Insulin-like"/>
</dbReference>
<dbReference type="InterPro" id="IPR036438">
    <property type="entry name" value="Insulin-like_sf"/>
</dbReference>
<dbReference type="InterPro" id="IPR022353">
    <property type="entry name" value="Insulin_CS"/>
</dbReference>
<dbReference type="Pfam" id="PF00049">
    <property type="entry name" value="Insulin"/>
    <property type="match status" value="1"/>
</dbReference>
<dbReference type="SMART" id="SM00078">
    <property type="entry name" value="IlGF"/>
    <property type="match status" value="1"/>
</dbReference>
<dbReference type="SUPFAM" id="SSF56994">
    <property type="entry name" value="Insulin-like"/>
    <property type="match status" value="1"/>
</dbReference>
<dbReference type="PROSITE" id="PS00262">
    <property type="entry name" value="INSULIN"/>
    <property type="match status" value="1"/>
</dbReference>
<organism>
    <name type="scientific">Conus tulipa</name>
    <name type="common">Fish-hunting cone snail</name>
    <name type="synonym">Tulip cone</name>
    <dbReference type="NCBI Taxonomy" id="6495"/>
    <lineage>
        <taxon>Eukaryota</taxon>
        <taxon>Metazoa</taxon>
        <taxon>Spiralia</taxon>
        <taxon>Lophotrochozoa</taxon>
        <taxon>Mollusca</taxon>
        <taxon>Gastropoda</taxon>
        <taxon>Caenogastropoda</taxon>
        <taxon>Neogastropoda</taxon>
        <taxon>Conoidea</taxon>
        <taxon>Conidae</taxon>
        <taxon>Conus</taxon>
        <taxon>Gastridium</taxon>
    </lineage>
</organism>
<comment type="function">
    <text evidence="1">This venom insulin facilitates prey capture by rapidly inducing hypoglycemic shock. It is one of the smallest known insulin found in nature and lacks the C-terminal segment of the B chain that, in human insulin, mediates engagement of the insulin receptor (INSR) and assembly of the hormone's hexameric storage form. Despite lacking this segment, it both binds and activates human insulin receptor (long isoform (HIR-B) OF INSR) with only a 10-fold lower potency. In vivo, intraperitoneal injection of this peptide into zebrafish lowers blood glucose with the same potency than human insulin. In addition, when applied to water, this peptide reduces overall locomotor activity of zebrafish larvae, observed as a significant decrease in the percentage of time spent swimming and movement frequency.</text>
</comment>
<comment type="subunit">
    <text evidence="1">Heterodimer of A and B chains; disulfide-linked.</text>
</comment>
<comment type="subcellular location">
    <subcellularLocation>
        <location evidence="1">Secreted</location>
    </subcellularLocation>
</comment>
<comment type="tissue specificity">
    <text evidence="5">Expressed by the venom gland.</text>
</comment>
<comment type="similarity">
    <text>Belongs to the insulin family.</text>
</comment>
<keyword id="KW-0027">Amidation</keyword>
<keyword id="KW-0119">Carbohydrate metabolism</keyword>
<keyword id="KW-0165">Cleavage on pair of basic residues</keyword>
<keyword id="KW-1015">Disulfide bond</keyword>
<keyword id="KW-0301">Gamma-carboxyglutamic acid</keyword>
<keyword id="KW-0313">Glucose metabolism</keyword>
<keyword id="KW-0372">Hormone</keyword>
<keyword id="KW-0379">Hydroxylation</keyword>
<keyword id="KW-0964">Secreted</keyword>
<keyword id="KW-0732">Signal</keyword>
<keyword id="KW-0800">Toxin</keyword>
<name>INS3_CONTU</name>
<reference key="1">
    <citation type="journal article" date="2015" name="Proc. Natl. Acad. Sci. U.S.A.">
        <title>Specialized insulin is used for chemical warfare by fish-hunting cone snails.</title>
        <authorList>
            <person name="Safavi-Hemami H."/>
            <person name="Gajewiak J."/>
            <person name="Karanth S."/>
            <person name="Robinson S.D."/>
            <person name="Ueberheide B."/>
            <person name="Douglass A.D."/>
            <person name="Schlegel A."/>
            <person name="Imperial J.S."/>
            <person name="Watkins M."/>
            <person name="Bandyopadhyay P.K."/>
            <person name="Yandell M."/>
            <person name="Li Q."/>
            <person name="Purcell A.W."/>
            <person name="Norton R.S."/>
            <person name="Ellgaard L."/>
            <person name="Olivera B.M."/>
        </authorList>
    </citation>
    <scope>NUCLEOTIDE SEQUENCE [MRNA]</scope>
    <source>
        <tissue>Venom gland</tissue>
    </source>
</reference>
<protein>
    <recommendedName>
        <fullName evidence="3">Con-Ins T3</fullName>
    </recommendedName>
    <alternativeName>
        <fullName evidence="6">Insulin 3</fullName>
    </alternativeName>
    <component>
        <recommendedName>
            <fullName evidence="3">Con-Ins T3 B chain</fullName>
        </recommendedName>
    </component>
    <component>
        <recommendedName>
            <fullName evidence="3">Con-Ins T3 A chain</fullName>
        </recommendedName>
    </component>
</protein>
<feature type="signal peptide" evidence="2">
    <location>
        <begin position="1"/>
        <end position="24"/>
    </location>
</feature>
<feature type="propeptide" id="PRO_0000439306" evidence="1">
    <location>
        <begin position="25"/>
        <end position="29"/>
    </location>
</feature>
<feature type="peptide" id="PRO_5002097994" description="Con-Ins T3 B chain" evidence="1">
    <location>
        <begin position="30"/>
        <end position="52"/>
    </location>
</feature>
<feature type="propeptide" id="PRO_0000439307" description="C peptide" evidence="1">
    <location>
        <begin position="53"/>
        <end position="94"/>
    </location>
</feature>
<feature type="peptide" id="PRO_0000439308" description="Con-Ins T3 A chain" evidence="1">
    <location>
        <begin position="95"/>
        <end position="114"/>
    </location>
</feature>
<feature type="propeptide" id="PRO_0000439309" evidence="4">
    <location>
        <begin position="116"/>
        <end position="117"/>
    </location>
</feature>
<feature type="modified residue" description="4-hydroxyproline; partial" evidence="1">
    <location>
        <position position="34"/>
    </location>
</feature>
<feature type="modified residue" description="4-carboxyglutamate" evidence="1">
    <location>
        <position position="98"/>
    </location>
</feature>
<feature type="modified residue" description="4-carboxyglutamate; partial" evidence="1">
    <location>
        <position position="109"/>
    </location>
</feature>
<feature type="modified residue" description="Cysteine amide" evidence="1">
    <location>
        <position position="114"/>
    </location>
</feature>
<feature type="disulfide bond" description="Interchain (between B and A chains)" evidence="1">
    <location>
        <begin position="38"/>
        <end position="101"/>
    </location>
</feature>
<feature type="disulfide bond" description="Interchain (between B and A chains)" evidence="1">
    <location>
        <begin position="50"/>
        <end position="114"/>
    </location>
</feature>
<feature type="disulfide bond" evidence="1">
    <location>
        <begin position="100"/>
        <end position="105"/>
    </location>
</feature>
<proteinExistence type="inferred from homology"/>
<evidence type="ECO:0000250" key="1">
    <source>
        <dbReference type="UniProtKB" id="A0A0B5AC95"/>
    </source>
</evidence>
<evidence type="ECO:0000255" key="2"/>
<evidence type="ECO:0000303" key="3">
    <source>
    </source>
</evidence>
<evidence type="ECO:0000305" key="4"/>
<evidence type="ECO:0000305" key="5">
    <source>
    </source>
</evidence>
<evidence type="ECO:0000312" key="6">
    <source>
        <dbReference type="EMBL" id="AJD85821.1"/>
    </source>
</evidence>
<sequence>MTTSFYFLLMALGLLLYVCQSSFGNQHTRNSDTPKYRCGSDIPNSYMDLCFRKRNDAGKKRGQASPLWQRGGSLSMLKARAKRNEAFHLQRAHRGVVEHCCKRACSNAEFMQFCGNS</sequence>